<evidence type="ECO:0000250" key="1">
    <source>
        <dbReference type="UniProtKB" id="P02649"/>
    </source>
</evidence>
<evidence type="ECO:0000250" key="2">
    <source>
        <dbReference type="UniProtKB" id="P08226"/>
    </source>
</evidence>
<evidence type="ECO:0000255" key="3"/>
<evidence type="ECO:0000305" key="4"/>
<organism>
    <name type="scientific">Macaca fascicularis</name>
    <name type="common">Crab-eating macaque</name>
    <name type="synonym">Cynomolgus monkey</name>
    <dbReference type="NCBI Taxonomy" id="9541"/>
    <lineage>
        <taxon>Eukaryota</taxon>
        <taxon>Metazoa</taxon>
        <taxon>Chordata</taxon>
        <taxon>Craniata</taxon>
        <taxon>Vertebrata</taxon>
        <taxon>Euteleostomi</taxon>
        <taxon>Mammalia</taxon>
        <taxon>Eutheria</taxon>
        <taxon>Euarchontoglires</taxon>
        <taxon>Primates</taxon>
        <taxon>Haplorrhini</taxon>
        <taxon>Catarrhini</taxon>
        <taxon>Cercopithecidae</taxon>
        <taxon>Cercopithecinae</taxon>
        <taxon>Macaca</taxon>
    </lineage>
</organism>
<name>APOE_MACFA</name>
<reference key="1">
    <citation type="journal article" date="1989" name="Nucleic Acids Res.">
        <title>Nucleotide sequence of the cynomolgus monkey apolipoprotein E cDNA.</title>
        <authorList>
            <person name="Marotti K.R."/>
            <person name="Whitted B.E."/>
            <person name="Castle C.K."/>
            <person name="Polites H.G."/>
            <person name="Melchior G.W."/>
        </authorList>
    </citation>
    <scope>NUCLEOTIDE SEQUENCE [MRNA]</scope>
    <source>
        <tissue>Liver</tissue>
    </source>
</reference>
<keyword id="KW-0162">Chylomicron</keyword>
<keyword id="KW-0967">Endosome</keyword>
<keyword id="KW-0272">Extracellular matrix</keyword>
<keyword id="KW-0325">Glycoprotein</keyword>
<keyword id="KW-0345">HDL</keyword>
<keyword id="KW-0358">Heparin-binding</keyword>
<keyword id="KW-0445">Lipid transport</keyword>
<keyword id="KW-0446">Lipid-binding</keyword>
<keyword id="KW-0558">Oxidation</keyword>
<keyword id="KW-0597">Phosphoprotein</keyword>
<keyword id="KW-1185">Reference proteome</keyword>
<keyword id="KW-0677">Repeat</keyword>
<keyword id="KW-0964">Secreted</keyword>
<keyword id="KW-0732">Signal</keyword>
<keyword id="KW-0813">Transport</keyword>
<keyword id="KW-0850">VLDL</keyword>
<sequence length="317" mass="35918">MKVLWAALLVTFLAGCQAKVEQPVEPETEPELRQQAEGQSGQPWELALGRFWDYLRWVQTLSEQVQEELLSPQVTQELTTLMDETMKELKAYKSELEEQLSPVAEETRARLSKELQAAQARLGADMEDVRSRLVQYRSEVQAMLGQSTEELRARLASHLRKLRKRLLRDADDLQKRLAVYQAGAREGAERGVSAIRERLGPLVEQGRVRAATVGSLASQPLQERAQALGERLRARMEEMGSRTRDRLDEVKEQVAEVRAKLEEQAQQISLQAEAFQARLKSWFEPLVEDMQRQWAGLVEKVQAAVGASTAPVPIDNH</sequence>
<gene>
    <name type="primary">APOE</name>
</gene>
<accession>P10517</accession>
<proteinExistence type="evidence at transcript level"/>
<protein>
    <recommendedName>
        <fullName>Apolipoprotein E</fullName>
        <shortName>Apo-E</shortName>
    </recommendedName>
</protein>
<dbReference type="EMBL" id="X13887">
    <property type="protein sequence ID" value="CAA32092.1"/>
    <property type="molecule type" value="mRNA"/>
</dbReference>
<dbReference type="PIR" id="S03185">
    <property type="entry name" value="S03185"/>
</dbReference>
<dbReference type="SMR" id="P10517"/>
<dbReference type="STRING" id="9541.ENSMFAP00000029949"/>
<dbReference type="eggNOG" id="ENOG502QVD6">
    <property type="taxonomic scope" value="Eukaryota"/>
</dbReference>
<dbReference type="Proteomes" id="UP000233100">
    <property type="component" value="Unplaced"/>
</dbReference>
<dbReference type="GO" id="GO:0042627">
    <property type="term" value="C:chylomicron"/>
    <property type="evidence" value="ECO:0007669"/>
    <property type="project" value="UniProtKB-KW"/>
</dbReference>
<dbReference type="GO" id="GO:0070062">
    <property type="term" value="C:extracellular exosome"/>
    <property type="evidence" value="ECO:0000250"/>
    <property type="project" value="UniProtKB"/>
</dbReference>
<dbReference type="GO" id="GO:0031012">
    <property type="term" value="C:extracellular matrix"/>
    <property type="evidence" value="ECO:0000250"/>
    <property type="project" value="UniProtKB"/>
</dbReference>
<dbReference type="GO" id="GO:0005615">
    <property type="term" value="C:extracellular space"/>
    <property type="evidence" value="ECO:0000250"/>
    <property type="project" value="UniProtKB"/>
</dbReference>
<dbReference type="GO" id="GO:0034364">
    <property type="term" value="C:high-density lipoprotein particle"/>
    <property type="evidence" value="ECO:0000250"/>
    <property type="project" value="UniProtKB"/>
</dbReference>
<dbReference type="GO" id="GO:0034363">
    <property type="term" value="C:intermediate-density lipoprotein particle"/>
    <property type="evidence" value="ECO:0000250"/>
    <property type="project" value="UniProtKB"/>
</dbReference>
<dbReference type="GO" id="GO:0034362">
    <property type="term" value="C:low-density lipoprotein particle"/>
    <property type="evidence" value="ECO:0000250"/>
    <property type="project" value="UniProtKB"/>
</dbReference>
<dbReference type="GO" id="GO:0097487">
    <property type="term" value="C:multivesicular body, internal vesicle"/>
    <property type="evidence" value="ECO:0000250"/>
    <property type="project" value="UniProtKB"/>
</dbReference>
<dbReference type="GO" id="GO:0034361">
    <property type="term" value="C:very-low-density lipoprotein particle"/>
    <property type="evidence" value="ECO:0000250"/>
    <property type="project" value="UniProtKB"/>
</dbReference>
<dbReference type="GO" id="GO:0001540">
    <property type="term" value="F:amyloid-beta binding"/>
    <property type="evidence" value="ECO:0000250"/>
    <property type="project" value="UniProtKB"/>
</dbReference>
<dbReference type="GO" id="GO:0120020">
    <property type="term" value="F:cholesterol transfer activity"/>
    <property type="evidence" value="ECO:0007669"/>
    <property type="project" value="TreeGrafter"/>
</dbReference>
<dbReference type="GO" id="GO:0043395">
    <property type="term" value="F:heparan sulfate proteoglycan binding"/>
    <property type="evidence" value="ECO:0000250"/>
    <property type="project" value="UniProtKB"/>
</dbReference>
<dbReference type="GO" id="GO:0008201">
    <property type="term" value="F:heparin binding"/>
    <property type="evidence" value="ECO:0000250"/>
    <property type="project" value="UniProtKB"/>
</dbReference>
<dbReference type="GO" id="GO:0042802">
    <property type="term" value="F:identical protein binding"/>
    <property type="evidence" value="ECO:0000250"/>
    <property type="project" value="UniProtKB"/>
</dbReference>
<dbReference type="GO" id="GO:0050750">
    <property type="term" value="F:low-density lipoprotein particle receptor binding"/>
    <property type="evidence" value="ECO:0000250"/>
    <property type="project" value="UniProtKB"/>
</dbReference>
<dbReference type="GO" id="GO:0060228">
    <property type="term" value="F:phosphatidylcholine-sterol O-acyltransferase activator activity"/>
    <property type="evidence" value="ECO:0007669"/>
    <property type="project" value="TreeGrafter"/>
</dbReference>
<dbReference type="GO" id="GO:0005543">
    <property type="term" value="F:phospholipid binding"/>
    <property type="evidence" value="ECO:0007669"/>
    <property type="project" value="TreeGrafter"/>
</dbReference>
<dbReference type="GO" id="GO:0055090">
    <property type="term" value="P:acylglycerol homeostasis"/>
    <property type="evidence" value="ECO:0007669"/>
    <property type="project" value="TreeGrafter"/>
</dbReference>
<dbReference type="GO" id="GO:0033344">
    <property type="term" value="P:cholesterol efflux"/>
    <property type="evidence" value="ECO:0000250"/>
    <property type="project" value="UniProtKB"/>
</dbReference>
<dbReference type="GO" id="GO:0008203">
    <property type="term" value="P:cholesterol metabolic process"/>
    <property type="evidence" value="ECO:0007669"/>
    <property type="project" value="TreeGrafter"/>
</dbReference>
<dbReference type="GO" id="GO:0034382">
    <property type="term" value="P:chylomicron remnant clearance"/>
    <property type="evidence" value="ECO:0000250"/>
    <property type="project" value="UniProtKB"/>
</dbReference>
<dbReference type="GO" id="GO:0034380">
    <property type="term" value="P:high-density lipoprotein particle assembly"/>
    <property type="evidence" value="ECO:0000250"/>
    <property type="project" value="UniProtKB"/>
</dbReference>
<dbReference type="GO" id="GO:0071831">
    <property type="term" value="P:intermediate-density lipoprotein particle clearance"/>
    <property type="evidence" value="ECO:0000250"/>
    <property type="project" value="UniProtKB"/>
</dbReference>
<dbReference type="GO" id="GO:0042158">
    <property type="term" value="P:lipoprotein biosynthetic process"/>
    <property type="evidence" value="ECO:0000250"/>
    <property type="project" value="UniProtKB"/>
</dbReference>
<dbReference type="GO" id="GO:0032438">
    <property type="term" value="P:melanosome organization"/>
    <property type="evidence" value="ECO:0000250"/>
    <property type="project" value="UniProtKB"/>
</dbReference>
<dbReference type="GO" id="GO:1905907">
    <property type="term" value="P:negative regulation of amyloid fibril formation"/>
    <property type="evidence" value="ECO:0000250"/>
    <property type="project" value="UniProtKB"/>
</dbReference>
<dbReference type="GO" id="GO:0031175">
    <property type="term" value="P:neuron projection development"/>
    <property type="evidence" value="ECO:0000250"/>
    <property type="project" value="UniProtKB"/>
</dbReference>
<dbReference type="GO" id="GO:0033700">
    <property type="term" value="P:phospholipid efflux"/>
    <property type="evidence" value="ECO:0007669"/>
    <property type="project" value="TreeGrafter"/>
</dbReference>
<dbReference type="GO" id="GO:1900223">
    <property type="term" value="P:positive regulation of amyloid-beta clearance"/>
    <property type="evidence" value="ECO:0000250"/>
    <property type="project" value="UniProtKB"/>
</dbReference>
<dbReference type="GO" id="GO:0071830">
    <property type="term" value="P:triglyceride-rich lipoprotein particle clearance"/>
    <property type="evidence" value="ECO:0000250"/>
    <property type="project" value="UniProtKB"/>
</dbReference>
<dbReference type="GO" id="GO:0034447">
    <property type="term" value="P:very-low-density lipoprotein particle clearance"/>
    <property type="evidence" value="ECO:0000250"/>
    <property type="project" value="UniProtKB"/>
</dbReference>
<dbReference type="FunFam" id="1.20.120.20:FF:000002">
    <property type="entry name" value="Apolipoprotein E"/>
    <property type="match status" value="1"/>
</dbReference>
<dbReference type="FunFam" id="1.20.120.20:FF:000003">
    <property type="entry name" value="Apolipoprotein E"/>
    <property type="match status" value="1"/>
</dbReference>
<dbReference type="Gene3D" id="1.20.120.20">
    <property type="entry name" value="Apolipoprotein"/>
    <property type="match status" value="2"/>
</dbReference>
<dbReference type="InterPro" id="IPR000074">
    <property type="entry name" value="ApoA_E"/>
</dbReference>
<dbReference type="InterPro" id="IPR050163">
    <property type="entry name" value="Apolipoprotein_A1/A4/E"/>
</dbReference>
<dbReference type="PANTHER" id="PTHR18976">
    <property type="entry name" value="APOLIPOPROTEIN"/>
    <property type="match status" value="1"/>
</dbReference>
<dbReference type="PANTHER" id="PTHR18976:SF2">
    <property type="entry name" value="APOLIPOPROTEIN E"/>
    <property type="match status" value="1"/>
</dbReference>
<dbReference type="Pfam" id="PF01442">
    <property type="entry name" value="Apolipoprotein"/>
    <property type="match status" value="1"/>
</dbReference>
<dbReference type="SUPFAM" id="SSF58113">
    <property type="entry name" value="Apolipoprotein A-I"/>
    <property type="match status" value="1"/>
</dbReference>
<comment type="function">
    <text evidence="1">APOE is an apolipoprotein, a protein associating with lipid particles, that mainly functions in lipoprotein-mediated lipid transport between organs via the plasma and interstitial fluids. APOE is a core component of plasma lipoproteins and is involved in their production, conversion and clearance. Apolipoproteins are amphipathic molecules that interact both with lipids of the lipoprotein particle core and the aqueous environment of the plasma. As such, APOE associates with chylomicrons, chylomicron remnants, very low density lipoproteins (VLDL) and intermediate density lipoproteins (IDL) but shows a preferential binding to high-density lipoproteins (HDL). It also binds a wide range of cellular receptors including the LDL receptor/LDLR, the LDL receptor-related proteins LRP1, LRP2 and LRP8 and the very low-density lipoprotein receptor/VLDLR that mediate the cellular uptake of the APOE-containing lipoprotein particles. Finally, APOE also has a heparin-binding activity and binds heparan-sulfate proteoglycans on the surface of cells, a property that supports the capture and the receptor-mediated uptake of APOE-containing lipoproteins by cells. A main function of APOE is to mediate lipoprotein clearance through the uptake of chylomicrons, VLDLs, and HDLs by hepatocytes. APOE is also involved in the biosynthesis by the liver of VLDLs as well as their uptake by peripheral tissues ensuring the delivery of triglycerides and energy storage in muscle, heart and adipose tissues. By participating in the lipoprotein-mediated distribution of lipids among tissues, APOE plays a critical role in plasma and tissues lipid homeostasis. APOE is also involved in two steps of reverse cholesterol transport, the HDLs-mediated transport of cholesterol from peripheral tissues to the liver, and thereby plays an important role in cholesterol homeostasis. First, it is functionally associated with ABCA1 in the biogenesis of HDLs in tissues. Second, it is enriched in circulating HDLs and mediates their uptake by hepatocytes. APOE also plays an important role in lipid transport in the central nervous system, regulating neuron survival and sprouting.</text>
</comment>
<comment type="subunit">
    <text evidence="1">Homotetramer. May interact with ABCA1; functionally associated with ABCA1 in the biogenesis of HDLs. May interact with APP/A4 amyloid-beta peptide; the interaction is extremely stable in vitro but its physiological significance is unclear. May interact with MAPT. May interact with MAP2. In the cerebrospinal fluid, interacts with secreted SORL1. Interacts with PMEL; this allows the loading of PMEL luminal fragment on ILVs to induce fibril nucleation.</text>
</comment>
<comment type="subcellular location">
    <subcellularLocation>
        <location evidence="1">Secreted</location>
    </subcellularLocation>
    <subcellularLocation>
        <location evidence="1">Secreted</location>
        <location evidence="1">Extracellular space</location>
    </subcellularLocation>
    <subcellularLocation>
        <location evidence="1">Secreted</location>
        <location evidence="1">Extracellular space</location>
        <location evidence="1">Extracellular matrix</location>
    </subcellularLocation>
    <subcellularLocation>
        <location evidence="1">Extracellular vesicle</location>
    </subcellularLocation>
    <subcellularLocation>
        <location evidence="1">Endosome</location>
        <location evidence="1">Multivesicular body</location>
    </subcellularLocation>
    <text evidence="1">In the plasma, APOE is associated with chylomicrons, chylomicrons remnants, VLDL, LDL and HDL lipoproteins. Lipid poor oligomeric APOE is associated with the extracellular matrix in a calcium- and heparan-sulfate proteoglycans-dependent manner. Lipidation induces the release from the extracellular matrix. Colocalizes with CD63 and PMEL at exosomes and in intraluminal vesicles within multivesicular endosomes.</text>
</comment>
<comment type="PTM">
    <text evidence="1">APOE exists as multiple glycosylated and sialylated glycoforms within cells and in plasma. The extent of glycosylation and sialylation are tissue and context specific.</text>
</comment>
<comment type="PTM">
    <text evidence="1">Glycated in plasma VLDL.</text>
</comment>
<comment type="PTM">
    <text evidence="1">Phosphorylated by FAM20C in the extracellular medium.</text>
</comment>
<comment type="similarity">
    <text evidence="4">Belongs to the apolipoprotein A1/A4/E family.</text>
</comment>
<feature type="signal peptide" evidence="3">
    <location>
        <begin position="1"/>
        <end position="18"/>
    </location>
</feature>
<feature type="chain" id="PRO_0000001989" description="Apolipoprotein E">
    <location>
        <begin position="19"/>
        <end position="317"/>
    </location>
</feature>
<feature type="repeat" description="1">
    <location>
        <begin position="80"/>
        <end position="101"/>
    </location>
</feature>
<feature type="repeat" description="2">
    <location>
        <begin position="102"/>
        <end position="123"/>
    </location>
</feature>
<feature type="repeat" description="3">
    <location>
        <begin position="124"/>
        <end position="145"/>
    </location>
</feature>
<feature type="repeat" description="4">
    <location>
        <begin position="146"/>
        <end position="167"/>
    </location>
</feature>
<feature type="repeat" description="5">
    <location>
        <begin position="168"/>
        <end position="189"/>
    </location>
</feature>
<feature type="repeat" description="6">
    <location>
        <begin position="190"/>
        <end position="211"/>
    </location>
</feature>
<feature type="repeat" description="7">
    <location>
        <begin position="212"/>
        <end position="233"/>
    </location>
</feature>
<feature type="repeat" description="8">
    <location>
        <begin position="234"/>
        <end position="255"/>
    </location>
</feature>
<feature type="region of interest" description="8 X 22 AA approximate tandem repeats">
    <location>
        <begin position="80"/>
        <end position="255"/>
    </location>
</feature>
<feature type="region of interest" description="LDL and other lipoprotein receptors binding" evidence="1">
    <location>
        <begin position="158"/>
        <end position="168"/>
    </location>
</feature>
<feature type="region of interest" description="Lipid-binding and lipoprotein association" evidence="1">
    <location>
        <begin position="210"/>
        <end position="290"/>
    </location>
</feature>
<feature type="region of interest" description="Homooligomerization" evidence="1">
    <location>
        <begin position="266"/>
        <end position="317"/>
    </location>
</feature>
<feature type="region of interest" description="Specificity for association with VLDL" evidence="1">
    <location>
        <begin position="278"/>
        <end position="290"/>
    </location>
</feature>
<feature type="binding site" evidence="1">
    <location>
        <begin position="162"/>
        <end position="165"/>
    </location>
    <ligand>
        <name>heparin</name>
        <dbReference type="ChEBI" id="CHEBI:28304"/>
    </ligand>
</feature>
<feature type="binding site" evidence="1">
    <location>
        <begin position="229"/>
        <end position="236"/>
    </location>
    <ligand>
        <name>heparin</name>
        <dbReference type="ChEBI" id="CHEBI:28304"/>
    </ligand>
</feature>
<feature type="modified residue" description="Methionine sulfoxide" evidence="2">
    <location>
        <position position="143"/>
    </location>
</feature>
<feature type="modified residue" description="Phosphoserine" evidence="1">
    <location>
        <position position="147"/>
    </location>
</feature>